<evidence type="ECO:0000250" key="1">
    <source>
        <dbReference type="UniProtKB" id="P08518"/>
    </source>
</evidence>
<evidence type="ECO:0000250" key="2">
    <source>
        <dbReference type="UniProtKB" id="P30876"/>
    </source>
</evidence>
<evidence type="ECO:0000269" key="3">
    <source>
    </source>
</evidence>
<evidence type="ECO:0000269" key="4">
    <source>
    </source>
</evidence>
<evidence type="ECO:0000269" key="5">
    <source>
    </source>
</evidence>
<evidence type="ECO:0000269" key="6">
    <source>
    </source>
</evidence>
<evidence type="ECO:0000305" key="7"/>
<evidence type="ECO:0007744" key="8">
    <source>
        <dbReference type="PDB" id="5FLM"/>
    </source>
</evidence>
<evidence type="ECO:0007744" key="9">
    <source>
        <dbReference type="PDB" id="5OIK"/>
    </source>
</evidence>
<evidence type="ECO:0007829" key="10">
    <source>
        <dbReference type="PDB" id="5FLM"/>
    </source>
</evidence>
<name>RPB2_BOVIN</name>
<dbReference type="EC" id="2.7.7.6" evidence="3 4"/>
<dbReference type="EC" id="3.1.13.-" evidence="2"/>
<dbReference type="EC" id="2.7.7.48" evidence="2"/>
<dbReference type="EMBL" id="BC142267">
    <property type="protein sequence ID" value="AAI42268.1"/>
    <property type="molecule type" value="mRNA"/>
</dbReference>
<dbReference type="RefSeq" id="NP_001092552.1">
    <property type="nucleotide sequence ID" value="NM_001099082.2"/>
</dbReference>
<dbReference type="PDB" id="5FLM">
    <property type="method" value="EM"/>
    <property type="resolution" value="3.40 A"/>
    <property type="chains" value="B=1-1174"/>
</dbReference>
<dbReference type="PDB" id="5OIK">
    <property type="method" value="EM"/>
    <property type="resolution" value="3.70 A"/>
    <property type="chains" value="B=1-1174"/>
</dbReference>
<dbReference type="PDBsum" id="5FLM"/>
<dbReference type="PDBsum" id="5OIK"/>
<dbReference type="EMDB" id="EMD-3218"/>
<dbReference type="EMDB" id="EMD-3817"/>
<dbReference type="SMR" id="A5PJW8"/>
<dbReference type="DIP" id="DIP-61188N"/>
<dbReference type="FunCoup" id="A5PJW8">
    <property type="interactions" value="4307"/>
</dbReference>
<dbReference type="IntAct" id="A5PJW8">
    <property type="interactions" value="4"/>
</dbReference>
<dbReference type="STRING" id="9913.ENSBTAP00000025800"/>
<dbReference type="PaxDb" id="9913-ENSBTAP00000025800"/>
<dbReference type="Ensembl" id="ENSBTAT00000025800.5">
    <property type="protein sequence ID" value="ENSBTAP00000025800.4"/>
    <property type="gene ID" value="ENSBTAG00000019366.6"/>
</dbReference>
<dbReference type="GeneID" id="538184"/>
<dbReference type="KEGG" id="bta:538184"/>
<dbReference type="CTD" id="5431"/>
<dbReference type="VEuPathDB" id="HostDB:ENSBTAG00000019366"/>
<dbReference type="VGNC" id="VGNC:33136">
    <property type="gene designation" value="POLR2B"/>
</dbReference>
<dbReference type="eggNOG" id="KOG0214">
    <property type="taxonomic scope" value="Eukaryota"/>
</dbReference>
<dbReference type="GeneTree" id="ENSGT00950000183132"/>
<dbReference type="HOGENOM" id="CLU_000524_5_2_1"/>
<dbReference type="OMA" id="CYDRNDS"/>
<dbReference type="OrthoDB" id="10248617at2759"/>
<dbReference type="TreeFam" id="TF103037"/>
<dbReference type="Reactome" id="R-BTA-112382">
    <property type="pathway name" value="Formation of RNA Pol II elongation complex"/>
</dbReference>
<dbReference type="Reactome" id="R-BTA-113418">
    <property type="pathway name" value="Formation of the Early Elongation Complex"/>
</dbReference>
<dbReference type="Reactome" id="R-BTA-5578749">
    <property type="pathway name" value="Transcriptional regulation by small RNAs"/>
</dbReference>
<dbReference type="Reactome" id="R-BTA-674695">
    <property type="pathway name" value="RNA Polymerase II Pre-transcription Events"/>
</dbReference>
<dbReference type="Reactome" id="R-BTA-6781823">
    <property type="pathway name" value="Formation of TC-NER Pre-Incision Complex"/>
</dbReference>
<dbReference type="Reactome" id="R-BTA-6782135">
    <property type="pathway name" value="Dual incision in TC-NER"/>
</dbReference>
<dbReference type="Reactome" id="R-BTA-6782210">
    <property type="pathway name" value="Gap-filling DNA repair synthesis and ligation in TC-NER"/>
</dbReference>
<dbReference type="Reactome" id="R-BTA-6796648">
    <property type="pathway name" value="TP53 Regulates Transcription of DNA Repair Genes"/>
</dbReference>
<dbReference type="Reactome" id="R-BTA-6803529">
    <property type="pathway name" value="FGFR2 alternative splicing"/>
</dbReference>
<dbReference type="Reactome" id="R-BTA-6807505">
    <property type="pathway name" value="RNA polymerase II transcribes snRNA genes"/>
</dbReference>
<dbReference type="Reactome" id="R-BTA-72086">
    <property type="pathway name" value="mRNA Capping"/>
</dbReference>
<dbReference type="Reactome" id="R-BTA-72163">
    <property type="pathway name" value="mRNA Splicing - Major Pathway"/>
</dbReference>
<dbReference type="Reactome" id="R-BTA-72165">
    <property type="pathway name" value="mRNA Splicing - Minor Pathway"/>
</dbReference>
<dbReference type="Reactome" id="R-BTA-72203">
    <property type="pathway name" value="Processing of Capped Intron-Containing Pre-mRNA"/>
</dbReference>
<dbReference type="Reactome" id="R-BTA-73776">
    <property type="pathway name" value="RNA Polymerase II Promoter Escape"/>
</dbReference>
<dbReference type="Reactome" id="R-BTA-73779">
    <property type="pathway name" value="RNA Polymerase II Transcription Pre-Initiation And Promoter Opening"/>
</dbReference>
<dbReference type="Reactome" id="R-BTA-75953">
    <property type="pathway name" value="RNA Polymerase II Transcription Initiation"/>
</dbReference>
<dbReference type="Reactome" id="R-BTA-75955">
    <property type="pathway name" value="RNA Polymerase II Transcription Elongation"/>
</dbReference>
<dbReference type="Reactome" id="R-BTA-76042">
    <property type="pathway name" value="RNA Polymerase II Transcription Initiation And Promoter Clearance"/>
</dbReference>
<dbReference type="Reactome" id="R-BTA-77075">
    <property type="pathway name" value="RNA Pol II CTD phosphorylation and interaction with CE"/>
</dbReference>
<dbReference type="Reactome" id="R-BTA-9018519">
    <property type="pathway name" value="Estrogen-dependent gene expression"/>
</dbReference>
<dbReference type="EvolutionaryTrace" id="A5PJW8"/>
<dbReference type="Proteomes" id="UP000009136">
    <property type="component" value="Chromosome 6"/>
</dbReference>
<dbReference type="Bgee" id="ENSBTAG00000019366">
    <property type="expression patterns" value="Expressed in thymus and 108 other cell types or tissues"/>
</dbReference>
<dbReference type="GO" id="GO:0000781">
    <property type="term" value="C:chromosome, telomeric region"/>
    <property type="evidence" value="ECO:0007669"/>
    <property type="project" value="Ensembl"/>
</dbReference>
<dbReference type="GO" id="GO:0005739">
    <property type="term" value="C:mitochondrion"/>
    <property type="evidence" value="ECO:0007669"/>
    <property type="project" value="GOC"/>
</dbReference>
<dbReference type="GO" id="GO:0005665">
    <property type="term" value="C:RNA polymerase II, core complex"/>
    <property type="evidence" value="ECO:0000314"/>
    <property type="project" value="UniProtKB"/>
</dbReference>
<dbReference type="GO" id="GO:0003682">
    <property type="term" value="F:chromatin binding"/>
    <property type="evidence" value="ECO:0007669"/>
    <property type="project" value="Ensembl"/>
</dbReference>
<dbReference type="GO" id="GO:0003677">
    <property type="term" value="F:DNA binding"/>
    <property type="evidence" value="ECO:0007669"/>
    <property type="project" value="InterPro"/>
</dbReference>
<dbReference type="GO" id="GO:0003899">
    <property type="term" value="F:DNA-directed RNA polymerase activity"/>
    <property type="evidence" value="ECO:0000314"/>
    <property type="project" value="UniProtKB"/>
</dbReference>
<dbReference type="GO" id="GO:0071667">
    <property type="term" value="F:DNA/RNA hybrid binding"/>
    <property type="evidence" value="ECO:0000314"/>
    <property type="project" value="UniProtKB"/>
</dbReference>
<dbReference type="GO" id="GO:0016787">
    <property type="term" value="F:hydrolase activity"/>
    <property type="evidence" value="ECO:0007669"/>
    <property type="project" value="UniProtKB-KW"/>
</dbReference>
<dbReference type="GO" id="GO:0032549">
    <property type="term" value="F:ribonucleoside binding"/>
    <property type="evidence" value="ECO:0007669"/>
    <property type="project" value="InterPro"/>
</dbReference>
<dbReference type="GO" id="GO:0003968">
    <property type="term" value="F:RNA-directed RNA polymerase activity"/>
    <property type="evidence" value="ECO:0007669"/>
    <property type="project" value="UniProtKB-KW"/>
</dbReference>
<dbReference type="GO" id="GO:0008270">
    <property type="term" value="F:zinc ion binding"/>
    <property type="evidence" value="ECO:0000314"/>
    <property type="project" value="UniProtKB"/>
</dbReference>
<dbReference type="GO" id="GO:0006366">
    <property type="term" value="P:transcription by RNA polymerase II"/>
    <property type="evidence" value="ECO:0007669"/>
    <property type="project" value="Ensembl"/>
</dbReference>
<dbReference type="CDD" id="cd00653">
    <property type="entry name" value="RNA_pol_B_RPB2"/>
    <property type="match status" value="1"/>
</dbReference>
<dbReference type="FunFam" id="2.40.270.10:FF:000026">
    <property type="match status" value="1"/>
</dbReference>
<dbReference type="FunFam" id="2.40.50.150:FF:000002">
    <property type="entry name" value="DNA-directed RNA polymerase subunit beta"/>
    <property type="match status" value="1"/>
</dbReference>
<dbReference type="FunFam" id="3.90.1070.20:FF:000001">
    <property type="entry name" value="DNA-directed RNA polymerase subunit beta"/>
    <property type="match status" value="1"/>
</dbReference>
<dbReference type="FunFam" id="3.90.1100.10:FF:000003">
    <property type="entry name" value="DNA-directed RNA polymerase subunit beta"/>
    <property type="match status" value="1"/>
</dbReference>
<dbReference type="FunFam" id="3.90.1100.10:FF:000043">
    <property type="entry name" value="DNA-directed RNA polymerase subunit beta"/>
    <property type="match status" value="1"/>
</dbReference>
<dbReference type="FunFam" id="3.90.1110.10:FF:000002">
    <property type="entry name" value="DNA-directed RNA polymerase subunit beta"/>
    <property type="match status" value="1"/>
</dbReference>
<dbReference type="FunFam" id="3.90.1800.10:FF:000002">
    <property type="entry name" value="DNA-directed RNA polymerase subunit beta"/>
    <property type="match status" value="1"/>
</dbReference>
<dbReference type="Gene3D" id="2.40.50.150">
    <property type="match status" value="1"/>
</dbReference>
<dbReference type="Gene3D" id="3.90.1070.20">
    <property type="match status" value="1"/>
</dbReference>
<dbReference type="Gene3D" id="3.90.1100.10">
    <property type="match status" value="1"/>
</dbReference>
<dbReference type="Gene3D" id="2.40.270.10">
    <property type="entry name" value="DNA-directed RNA polymerase, subunit 2, domain 6"/>
    <property type="match status" value="1"/>
</dbReference>
<dbReference type="Gene3D" id="3.90.1800.10">
    <property type="entry name" value="RNA polymerase alpha subunit dimerisation domain"/>
    <property type="match status" value="1"/>
</dbReference>
<dbReference type="Gene3D" id="3.90.1110.10">
    <property type="entry name" value="RNA polymerase Rpb2, domain 2"/>
    <property type="match status" value="1"/>
</dbReference>
<dbReference type="InterPro" id="IPR015712">
    <property type="entry name" value="DNA-dir_RNA_pol_su2"/>
</dbReference>
<dbReference type="InterPro" id="IPR007120">
    <property type="entry name" value="DNA-dir_RNAP_su2_dom"/>
</dbReference>
<dbReference type="InterPro" id="IPR037033">
    <property type="entry name" value="DNA-dir_RNAP_su2_hyb_sf"/>
</dbReference>
<dbReference type="InterPro" id="IPR007121">
    <property type="entry name" value="RNA_pol_bsu_CS"/>
</dbReference>
<dbReference type="InterPro" id="IPR007644">
    <property type="entry name" value="RNA_pol_bsu_protrusion"/>
</dbReference>
<dbReference type="InterPro" id="IPR007642">
    <property type="entry name" value="RNA_pol_Rpb2_2"/>
</dbReference>
<dbReference type="InterPro" id="IPR037034">
    <property type="entry name" value="RNA_pol_Rpb2_2_sf"/>
</dbReference>
<dbReference type="InterPro" id="IPR007645">
    <property type="entry name" value="RNA_pol_Rpb2_3"/>
</dbReference>
<dbReference type="InterPro" id="IPR007646">
    <property type="entry name" value="RNA_pol_Rpb2_4"/>
</dbReference>
<dbReference type="InterPro" id="IPR007647">
    <property type="entry name" value="RNA_pol_Rpb2_5"/>
</dbReference>
<dbReference type="InterPro" id="IPR007641">
    <property type="entry name" value="RNA_pol_Rpb2_7"/>
</dbReference>
<dbReference type="InterPro" id="IPR014724">
    <property type="entry name" value="RNA_pol_RPB2_OB-fold"/>
</dbReference>
<dbReference type="NCBIfam" id="NF007175">
    <property type="entry name" value="PRK09606.1"/>
    <property type="match status" value="1"/>
</dbReference>
<dbReference type="PANTHER" id="PTHR20856">
    <property type="entry name" value="DNA-DIRECTED RNA POLYMERASE I SUBUNIT 2"/>
    <property type="match status" value="1"/>
</dbReference>
<dbReference type="Pfam" id="PF04563">
    <property type="entry name" value="RNA_pol_Rpb2_1"/>
    <property type="match status" value="1"/>
</dbReference>
<dbReference type="Pfam" id="PF04561">
    <property type="entry name" value="RNA_pol_Rpb2_2"/>
    <property type="match status" value="1"/>
</dbReference>
<dbReference type="Pfam" id="PF04565">
    <property type="entry name" value="RNA_pol_Rpb2_3"/>
    <property type="match status" value="1"/>
</dbReference>
<dbReference type="Pfam" id="PF04566">
    <property type="entry name" value="RNA_pol_Rpb2_4"/>
    <property type="match status" value="1"/>
</dbReference>
<dbReference type="Pfam" id="PF04567">
    <property type="entry name" value="RNA_pol_Rpb2_5"/>
    <property type="match status" value="1"/>
</dbReference>
<dbReference type="Pfam" id="PF00562">
    <property type="entry name" value="RNA_pol_Rpb2_6"/>
    <property type="match status" value="1"/>
</dbReference>
<dbReference type="Pfam" id="PF04560">
    <property type="entry name" value="RNA_pol_Rpb2_7"/>
    <property type="match status" value="1"/>
</dbReference>
<dbReference type="SUPFAM" id="SSF64484">
    <property type="entry name" value="beta and beta-prime subunits of DNA dependent RNA-polymerase"/>
    <property type="match status" value="1"/>
</dbReference>
<dbReference type="PROSITE" id="PS01166">
    <property type="entry name" value="RNA_POL_BETA"/>
    <property type="match status" value="1"/>
</dbReference>
<proteinExistence type="evidence at protein level"/>
<reference key="1">
    <citation type="submission" date="2018-03" db="EMBL/GenBank/DDBJ databases">
        <title>ARS-UCD1.2.</title>
        <authorList>
            <person name="Rosen B.D."/>
            <person name="Bickhart D.M."/>
            <person name="Koren S."/>
            <person name="Schnabel R.D."/>
            <person name="Hall R."/>
            <person name="Zimin A."/>
            <person name="Dreischer C."/>
            <person name="Schultheiss S."/>
            <person name="Schroeder S.G."/>
            <person name="Elsik C.G."/>
            <person name="Couldrey C."/>
            <person name="Liu G.E."/>
            <person name="Van Tassell C.P."/>
            <person name="Phillippy A.M."/>
            <person name="Smith T.P.L."/>
            <person name="Medrano J.F."/>
        </authorList>
    </citation>
    <scope>NUCLEOTIDE SEQUENCE [LARGE SCALE GENOMIC DNA]</scope>
    <source>
        <strain>Hereford</strain>
    </source>
</reference>
<reference key="2">
    <citation type="submission" date="2005-08" db="EMBL/GenBank/DDBJ databases">
        <authorList>
            <consortium name="NIH - Mammalian Gene Collection (MGC) project"/>
        </authorList>
    </citation>
    <scope>NUCLEOTIDE SEQUENCE [LARGE SCALE MRNA]</scope>
    <source>
        <strain>Crossbred X Angus</strain>
        <tissue>Ileum</tissue>
    </source>
</reference>
<reference key="3">
    <citation type="journal article" date="1998" name="Cell">
        <title>Transcriptional fidelity and proofreading by RNA polymerase II.</title>
        <authorList>
            <person name="Thomas M.J."/>
            <person name="Platas A.A."/>
            <person name="Hawley D.K."/>
        </authorList>
    </citation>
    <scope>FUNCTION</scope>
</reference>
<reference key="4">
    <citation type="journal article" date="2006" name="Proc. Natl. Acad. Sci. U.S.A.">
        <title>A Mediator-responsive form of metazoan RNA polymerase II.</title>
        <authorList>
            <person name="Hu X."/>
            <person name="Malik S."/>
            <person name="Negroiu C.C."/>
            <person name="Hubbard K."/>
            <person name="Velalar C.N."/>
            <person name="Hampton B."/>
            <person name="Grosu D."/>
            <person name="Catalano J."/>
            <person name="Roeder R.G."/>
            <person name="Gnatt A."/>
        </authorList>
    </citation>
    <scope>FUNCTION</scope>
    <scope>CATALYTIC ACTIVITY</scope>
    <scope>SUBUNIT</scope>
    <scope>IDENTIFICATION IN POL II AND POL II(G) COMPLEXES</scope>
</reference>
<reference key="5">
    <citation type="journal article" date="2016" name="Nature">
        <title>Structure of transcribing mammalian RNA polymerase II.</title>
        <authorList>
            <person name="Bernecky C."/>
            <person name="Herzog F."/>
            <person name="Baumeister W."/>
            <person name="Plitzko J.M."/>
            <person name="Cramer P."/>
        </authorList>
    </citation>
    <scope>STRUCTURE BY ELECTRON MICROSCOPY (3.40 ANGSTROMS) IN COMPLEX WITH DNA-RNA HYBRID AND ZN(2+)</scope>
    <scope>FUNCTION</scope>
    <scope>CATALYTIC ACTIVITY</scope>
    <scope>SUBUNIT</scope>
</reference>
<reference key="6">
    <citation type="journal article" date="2017" name="Nat. Struct. Mol. Biol.">
        <title>Structure of a transcribing RNA polymerase II-DSIF complex reveals a multidentate DNA-RNA clamp.</title>
        <authorList>
            <person name="Bernecky C."/>
            <person name="Plitzko J.M."/>
            <person name="Cramer P."/>
        </authorList>
    </citation>
    <scope>STRUCTURE BY ELECTRON MICROSCOPY (3.70 ANGSTROMS) IN COMPLEX WITH DNA-RNA HYBRID AND ZN(2+)</scope>
    <scope>SUBUNIT</scope>
</reference>
<feature type="chain" id="PRO_0000459630" description="DNA-directed RNA polymerase II subunit RPB2">
    <location>
        <begin position="1"/>
        <end position="1174"/>
    </location>
</feature>
<feature type="zinc finger region" description="C4-type" evidence="4 5 8 9">
    <location>
        <begin position="1119"/>
        <end position="1140"/>
    </location>
</feature>
<feature type="binding site" evidence="2">
    <location>
        <position position="409"/>
    </location>
    <ligand>
        <name>DNA</name>
        <dbReference type="ChEBI" id="CHEBI:16991"/>
        <label>promoter</label>
    </ligand>
</feature>
<feature type="binding site" evidence="4 8">
    <location>
        <position position="456"/>
    </location>
    <ligand>
        <name>DNA</name>
        <dbReference type="ChEBI" id="CHEBI:16991"/>
        <label>template strand</label>
    </ligand>
</feature>
<feature type="binding site" evidence="4 5 8 9">
    <location>
        <position position="731"/>
    </location>
    <ligand>
        <name>RNA</name>
        <dbReference type="ChEBI" id="CHEBI:33697"/>
    </ligand>
</feature>
<feature type="binding site" evidence="1 2">
    <location>
        <position position="792"/>
    </location>
    <ligand>
        <name>Mg(2+)</name>
        <dbReference type="ChEBI" id="CHEBI:18420"/>
        <note>ligand shared with POLR2A/RPB1</note>
    </ligand>
</feature>
<feature type="binding site" evidence="4 5 8 9">
    <location>
        <position position="841"/>
    </location>
    <ligand>
        <name>RNA</name>
        <dbReference type="ChEBI" id="CHEBI:33697"/>
    </ligand>
</feature>
<feature type="binding site" evidence="4 8">
    <location>
        <position position="890"/>
    </location>
    <ligand>
        <name>RNA</name>
        <dbReference type="ChEBI" id="CHEBI:33697"/>
    </ligand>
</feature>
<feature type="binding site" evidence="4 5 8 9">
    <location>
        <position position="942"/>
    </location>
    <ligand>
        <name>RNA</name>
        <dbReference type="ChEBI" id="CHEBI:33697"/>
    </ligand>
</feature>
<feature type="binding site" evidence="5 9">
    <location>
        <position position="1078"/>
    </location>
    <ligand>
        <name>DNA</name>
        <dbReference type="ChEBI" id="CHEBI:16991"/>
        <label>template strand</label>
    </ligand>
</feature>
<feature type="binding site" evidence="4 5 8 9">
    <location>
        <position position="1085"/>
    </location>
    <ligand>
        <name>DNA</name>
        <dbReference type="ChEBI" id="CHEBI:16991"/>
        <label>template strand</label>
    </ligand>
</feature>
<feature type="binding site" evidence="4 5 8 9">
    <location>
        <position position="1119"/>
    </location>
    <ligand>
        <name>Zn(2+)</name>
        <dbReference type="ChEBI" id="CHEBI:29105"/>
    </ligand>
</feature>
<feature type="binding site" evidence="4 5 8 9">
    <location>
        <position position="1122"/>
    </location>
    <ligand>
        <name>Zn(2+)</name>
        <dbReference type="ChEBI" id="CHEBI:29105"/>
    </ligand>
</feature>
<feature type="binding site" evidence="4 5 8 9">
    <location>
        <position position="1137"/>
    </location>
    <ligand>
        <name>Zn(2+)</name>
        <dbReference type="ChEBI" id="CHEBI:29105"/>
    </ligand>
</feature>
<feature type="binding site" evidence="4 5 8 9">
    <location>
        <position position="1140"/>
    </location>
    <ligand>
        <name>Zn(2+)</name>
        <dbReference type="ChEBI" id="CHEBI:29105"/>
    </ligand>
</feature>
<feature type="modified residue" description="Phosphoserine" evidence="2">
    <location>
        <position position="937"/>
    </location>
</feature>
<feature type="modified residue" description="N6-methyllysine" evidence="2">
    <location>
        <position position="1052"/>
    </location>
</feature>
<feature type="helix" evidence="10">
    <location>
        <begin position="22"/>
        <end position="36"/>
    </location>
</feature>
<feature type="helix" evidence="10">
    <location>
        <begin position="41"/>
        <end position="52"/>
    </location>
</feature>
<feature type="helix" evidence="10">
    <location>
        <begin position="54"/>
        <end position="60"/>
    </location>
</feature>
<feature type="strand" evidence="10">
    <location>
        <begin position="65"/>
        <end position="67"/>
    </location>
</feature>
<feature type="strand" evidence="10">
    <location>
        <begin position="83"/>
        <end position="93"/>
    </location>
</feature>
<feature type="strand" evidence="10">
    <location>
        <begin position="97"/>
        <end position="99"/>
    </location>
</feature>
<feature type="strand" evidence="10">
    <location>
        <begin position="105"/>
        <end position="107"/>
    </location>
</feature>
<feature type="helix" evidence="10">
    <location>
        <begin position="110"/>
        <end position="115"/>
    </location>
</feature>
<feature type="strand" evidence="10">
    <location>
        <begin position="121"/>
        <end position="133"/>
    </location>
</feature>
<feature type="strand" evidence="10">
    <location>
        <begin position="135"/>
        <end position="137"/>
    </location>
</feature>
<feature type="strand" evidence="10">
    <location>
        <begin position="139"/>
        <end position="153"/>
    </location>
</feature>
<feature type="turn" evidence="10">
    <location>
        <begin position="162"/>
        <end position="165"/>
    </location>
</feature>
<feature type="helix" evidence="10">
    <location>
        <begin position="168"/>
        <end position="173"/>
    </location>
</feature>
<feature type="strand" evidence="10">
    <location>
        <begin position="185"/>
        <end position="187"/>
    </location>
</feature>
<feature type="strand" evidence="10">
    <location>
        <begin position="190"/>
        <end position="193"/>
    </location>
</feature>
<feature type="strand" evidence="10">
    <location>
        <begin position="196"/>
        <end position="200"/>
    </location>
</feature>
<feature type="strand" evidence="10">
    <location>
        <begin position="205"/>
        <end position="208"/>
    </location>
</feature>
<feature type="strand" evidence="10">
    <location>
        <begin position="211"/>
        <end position="225"/>
    </location>
</feature>
<feature type="turn" evidence="10">
    <location>
        <begin position="226"/>
        <end position="228"/>
    </location>
</feature>
<feature type="strand" evidence="10">
    <location>
        <begin position="229"/>
        <end position="240"/>
    </location>
</feature>
<feature type="helix" evidence="10">
    <location>
        <begin position="247"/>
        <end position="252"/>
    </location>
</feature>
<feature type="strand" evidence="10">
    <location>
        <begin position="256"/>
        <end position="259"/>
    </location>
</feature>
<feature type="strand" evidence="10">
    <location>
        <begin position="263"/>
        <end position="265"/>
    </location>
</feature>
<feature type="helix" evidence="10">
    <location>
        <begin position="269"/>
        <end position="275"/>
    </location>
</feature>
<feature type="helix" evidence="10">
    <location>
        <begin position="281"/>
        <end position="288"/>
    </location>
</feature>
<feature type="helix" evidence="10">
    <location>
        <begin position="295"/>
        <end position="307"/>
    </location>
</feature>
<feature type="turn" evidence="10">
    <location>
        <begin position="308"/>
        <end position="310"/>
    </location>
</feature>
<feature type="helix" evidence="10">
    <location>
        <begin position="314"/>
        <end position="322"/>
    </location>
</feature>
<feature type="strand" evidence="10">
    <location>
        <begin position="325"/>
        <end position="327"/>
    </location>
</feature>
<feature type="helix" evidence="10">
    <location>
        <begin position="332"/>
        <end position="344"/>
    </location>
</feature>
<feature type="turn" evidence="10">
    <location>
        <begin position="349"/>
        <end position="351"/>
    </location>
</feature>
<feature type="helix" evidence="10">
    <location>
        <begin position="357"/>
        <end position="376"/>
    </location>
</feature>
<feature type="strand" evidence="10">
    <location>
        <begin position="390"/>
        <end position="394"/>
    </location>
</feature>
<feature type="helix" evidence="10">
    <location>
        <begin position="396"/>
        <end position="423"/>
    </location>
</feature>
<feature type="turn" evidence="10">
    <location>
        <begin position="432"/>
        <end position="434"/>
    </location>
</feature>
<feature type="helix" evidence="10">
    <location>
        <begin position="438"/>
        <end position="449"/>
    </location>
</feature>
<feature type="turn" evidence="10">
    <location>
        <begin position="457"/>
        <end position="461"/>
    </location>
</feature>
<feature type="strand" evidence="10">
    <location>
        <begin position="467"/>
        <end position="469"/>
    </location>
</feature>
<feature type="helix" evidence="10">
    <location>
        <begin position="475"/>
        <end position="482"/>
    </location>
</feature>
<feature type="strand" evidence="10">
    <location>
        <begin position="483"/>
        <end position="486"/>
    </location>
</feature>
<feature type="strand" evidence="10">
    <location>
        <begin position="496"/>
        <end position="500"/>
    </location>
</feature>
<feature type="helix" evidence="10">
    <location>
        <begin position="503"/>
        <end position="505"/>
    </location>
</feature>
<feature type="turn" evidence="10">
    <location>
        <begin position="506"/>
        <end position="508"/>
    </location>
</feature>
<feature type="turn" evidence="10">
    <location>
        <begin position="518"/>
        <end position="522"/>
    </location>
</feature>
<feature type="strand" evidence="10">
    <location>
        <begin position="523"/>
        <end position="527"/>
    </location>
</feature>
<feature type="helix" evidence="10">
    <location>
        <begin position="539"/>
        <end position="547"/>
    </location>
</feature>
<feature type="turn" evidence="10">
    <location>
        <begin position="561"/>
        <end position="563"/>
    </location>
</feature>
<feature type="strand" evidence="10">
    <location>
        <begin position="564"/>
        <end position="569"/>
    </location>
</feature>
<feature type="strand" evidence="10">
    <location>
        <begin position="572"/>
        <end position="578"/>
    </location>
</feature>
<feature type="helix" evidence="10">
    <location>
        <begin position="580"/>
        <end position="592"/>
    </location>
</feature>
<feature type="strand" evidence="10">
    <location>
        <begin position="595"/>
        <end position="597"/>
    </location>
</feature>
<feature type="strand" evidence="10">
    <location>
        <begin position="602"/>
        <end position="605"/>
    </location>
</feature>
<feature type="strand" evidence="10">
    <location>
        <begin position="612"/>
        <end position="615"/>
    </location>
</feature>
<feature type="strand" evidence="10">
    <location>
        <begin position="621"/>
        <end position="629"/>
    </location>
</feature>
<feature type="strand" evidence="10">
    <location>
        <begin position="632"/>
        <end position="634"/>
    </location>
</feature>
<feature type="helix" evidence="10">
    <location>
        <begin position="637"/>
        <end position="644"/>
    </location>
</feature>
<feature type="turn" evidence="10">
    <location>
        <begin position="647"/>
        <end position="650"/>
    </location>
</feature>
<feature type="helix" evidence="10">
    <location>
        <begin position="653"/>
        <end position="657"/>
    </location>
</feature>
<feature type="turn" evidence="10">
    <location>
        <begin position="658"/>
        <end position="660"/>
    </location>
</feature>
<feature type="strand" evidence="10">
    <location>
        <begin position="661"/>
        <end position="666"/>
    </location>
</feature>
<feature type="helix" evidence="10">
    <location>
        <begin position="667"/>
        <end position="670"/>
    </location>
</feature>
<feature type="strand" evidence="10">
    <location>
        <begin position="675"/>
        <end position="677"/>
    </location>
</feature>
<feature type="helix" evidence="10">
    <location>
        <begin position="679"/>
        <end position="682"/>
    </location>
</feature>
<feature type="helix" evidence="10">
    <location>
        <begin position="700"/>
        <end position="703"/>
    </location>
</feature>
<feature type="helix" evidence="10">
    <location>
        <begin position="707"/>
        <end position="710"/>
    </location>
</feature>
<feature type="strand" evidence="10">
    <location>
        <begin position="711"/>
        <end position="713"/>
    </location>
</feature>
<feature type="helix" evidence="10">
    <location>
        <begin position="714"/>
        <end position="716"/>
    </location>
</feature>
<feature type="helix" evidence="10">
    <location>
        <begin position="719"/>
        <end position="728"/>
    </location>
</feature>
<feature type="turn" evidence="10">
    <location>
        <begin position="738"/>
        <end position="742"/>
    </location>
</feature>
<feature type="strand" evidence="10">
    <location>
        <begin position="746"/>
        <end position="753"/>
    </location>
</feature>
<feature type="strand" evidence="10">
    <location>
        <begin position="758"/>
        <end position="760"/>
    </location>
</feature>
<feature type="helix" evidence="10">
    <location>
        <begin position="762"/>
        <end position="767"/>
    </location>
</feature>
<feature type="turn" evidence="10">
    <location>
        <begin position="768"/>
        <end position="771"/>
    </location>
</feature>
<feature type="strand" evidence="10">
    <location>
        <begin position="775"/>
        <end position="782"/>
    </location>
</feature>
<feature type="strand" evidence="10">
    <location>
        <begin position="786"/>
        <end position="789"/>
    </location>
</feature>
<feature type="strand" evidence="10">
    <location>
        <begin position="794"/>
        <end position="797"/>
    </location>
</feature>
<feature type="helix" evidence="10">
    <location>
        <begin position="798"/>
        <end position="801"/>
    </location>
</feature>
<feature type="turn" evidence="10">
    <location>
        <begin position="802"/>
        <end position="806"/>
    </location>
</feature>
<feature type="strand" evidence="10">
    <location>
        <begin position="808"/>
        <end position="817"/>
    </location>
</feature>
<feature type="strand" evidence="10">
    <location>
        <begin position="822"/>
        <end position="824"/>
    </location>
</feature>
<feature type="strand" evidence="10">
    <location>
        <begin position="826"/>
        <end position="829"/>
    </location>
</feature>
<feature type="turn" evidence="10">
    <location>
        <begin position="834"/>
        <end position="836"/>
    </location>
</feature>
<feature type="strand" evidence="10">
    <location>
        <begin position="865"/>
        <end position="867"/>
    </location>
</feature>
<feature type="strand" evidence="10">
    <location>
        <begin position="869"/>
        <end position="872"/>
    </location>
</feature>
<feature type="strand" evidence="10">
    <location>
        <begin position="889"/>
        <end position="891"/>
    </location>
</feature>
<feature type="strand" evidence="10">
    <location>
        <begin position="902"/>
        <end position="911"/>
    </location>
</feature>
<feature type="strand" evidence="10">
    <location>
        <begin position="917"/>
        <end position="927"/>
    </location>
</feature>
<feature type="strand" evidence="10">
    <location>
        <begin position="934"/>
        <end position="937"/>
    </location>
</feature>
<feature type="strand" evidence="10">
    <location>
        <begin position="942"/>
        <end position="949"/>
    </location>
</feature>
<feature type="turn" evidence="10">
    <location>
        <begin position="951"/>
        <end position="953"/>
    </location>
</feature>
<feature type="strand" evidence="10">
    <location>
        <begin position="964"/>
        <end position="967"/>
    </location>
</feature>
<feature type="helix" evidence="10">
    <location>
        <begin position="971"/>
        <end position="975"/>
    </location>
</feature>
<feature type="helix" evidence="10">
    <location>
        <begin position="979"/>
        <end position="993"/>
    </location>
</feature>
<feature type="helix" evidence="10">
    <location>
        <begin position="1008"/>
        <end position="1015"/>
    </location>
</feature>
<feature type="helix" evidence="10">
    <location>
        <begin position="1016"/>
        <end position="1018"/>
    </location>
</feature>
<feature type="strand" evidence="10">
    <location>
        <begin position="1024"/>
        <end position="1026"/>
    </location>
</feature>
<feature type="turn" evidence="10">
    <location>
        <begin position="1031"/>
        <end position="1033"/>
    </location>
</feature>
<feature type="strand" evidence="10">
    <location>
        <begin position="1041"/>
        <end position="1052"/>
    </location>
</feature>
<feature type="helix" evidence="10">
    <location>
        <begin position="1055"/>
        <end position="1058"/>
    </location>
</feature>
<feature type="turn" evidence="10">
    <location>
        <begin position="1069"/>
        <end position="1071"/>
    </location>
</feature>
<feature type="turn" evidence="10">
    <location>
        <begin position="1078"/>
        <end position="1081"/>
    </location>
</feature>
<feature type="helix" evidence="10">
    <location>
        <begin position="1088"/>
        <end position="1097"/>
    </location>
</feature>
<feature type="helix" evidence="10">
    <location>
        <begin position="1100"/>
        <end position="1107"/>
    </location>
</feature>
<feature type="strand" evidence="10">
    <location>
        <begin position="1115"/>
        <end position="1125"/>
    </location>
</feature>
<feature type="turn" evidence="10">
    <location>
        <begin position="1130"/>
        <end position="1132"/>
    </location>
</feature>
<feature type="strand" evidence="10">
    <location>
        <begin position="1135"/>
        <end position="1137"/>
    </location>
</feature>
<feature type="turn" evidence="10">
    <location>
        <begin position="1138"/>
        <end position="1141"/>
    </location>
</feature>
<feature type="strand" evidence="10">
    <location>
        <begin position="1146"/>
        <end position="1150"/>
    </location>
</feature>
<feature type="helix" evidence="10">
    <location>
        <begin position="1153"/>
        <end position="1163"/>
    </location>
</feature>
<feature type="turn" evidence="10">
    <location>
        <begin position="1164"/>
        <end position="1166"/>
    </location>
</feature>
<feature type="strand" evidence="10">
    <location>
        <begin position="1170"/>
        <end position="1172"/>
    </location>
</feature>
<accession>A5PJW8</accession>
<accession>F1MPP6</accession>
<gene>
    <name type="primary">POLR2B</name>
</gene>
<protein>
    <recommendedName>
        <fullName>DNA-directed RNA polymerase II subunit RPB2</fullName>
        <ecNumber evidence="3 4">2.7.7.6</ecNumber>
    </recommendedName>
    <alternativeName>
        <fullName>3'-5' exoribonuclease</fullName>
        <ecNumber evidence="2">3.1.13.-</ecNumber>
    </alternativeName>
    <alternativeName>
        <fullName>RNA-directed RNA polymerase II subunit RPB2</fullName>
        <ecNumber evidence="2">2.7.7.48</ecNumber>
    </alternativeName>
</protein>
<sequence>MYDADEDMQYDEDDDEITPDLWQEACWIVISSYFDEKGLVRQQLDSFDEFIQMSVQRIVEDAPPIDLQAEAQHASGEVEEPPRYLLKFEQIYLSKPTHWERDGAPSPMMPNEARLRNLTYSAPLYVDITKTVIKEGEEQLQTQHQKTFIGKIPIMLRSTYCLLNGLTDRDLCELNECPLDPGGYFIINGSEKVLIAQEKMATNTVYVFAKKDSKYAYTGECRSCLENSSRPTSTIWVSMLARGGQGAKKSAIGQRIVATLPYIKQEVPIIIVFRALGFVSDRDILEHIIYDFEDPEMMEMVKPSLDEAFVIQEQNVALNFIGSRGAKPGVTKEKRIKYAKEVLQKEMLPHVGVSDFCETKKAYFLGYMVHRLLLAALGRRELDDRDHYGNKRLDLAGPLLAFLFRGMFKNLLKEVRIYAQKFIDRGKDFNLELAIKTRIISDGLKYSLATGNWGDQKKAHQARAGVSQVLNRLTFASTLSHLRRLNSPIGRDGKLAKPRQLHNTLWGMVCPAETPEGHAVGLVKNLALMAYISVGSQPSPILEFLEEWSMENLEEISPAAIADATKIFVNGCWVGIHKDPEQLMNTLRKLRRQMDIIVSEVSMIRDIREREIRIYTDAGRICRPLLIVEKQKLLLKKRHIDQLKEREYNNYSWQDLVASGVVEYIDTLEEETVMLAMTPDDLQEKEVAYCSTYTHCEIHPSMILGVCASIIPFPDHNQSPRNTYQSAMGKQAMGVYITNFHVRMDTLAHVLYYPQKPLVTTRSMEYLRFRELPAGINSIVAIASYTGYNQEDSVIMNRSAVDRGFFRSVFYRSYKEQESKKGFDQEEVFEKPTRETCQGMRHAIYDKLDDDGLIAPGVRVSGDDVIIGKTVTLPENEDELEGTNRRYTKRDCSTFLRTSETGIVDQVMVTLNQEGYKFCKIRVRSVRIPQIGDKFASRHGQKGTCGIQYRQEDMPFTCEGITPDIIINPHAIPSRMTIGHLIECLQGKVSANKGEIGDATPFNDAVNVQKISNLLSDYGYHLRGNEVLYNGFTGRKITSQIFIGPTYYQRLKHMVDDKIHSRARGPIQILNRQPMEGRSRDGGLRFGEMERDCQIAHGAAQFLRERLFEASDPYQVHVCNLCGIMAIANTRTHTYECRGCRNKTQISLVRMPYACKLLFQELMSMSIAPRMMSV</sequence>
<comment type="function">
    <text evidence="2 3 4 6">Catalytic core component of RNA polymerase II (Pol II), a DNA-dependent RNA polymerase which synthesizes mRNA precursors and many functional non-coding RNAs using the four ribonucleoside triphosphates as substrates (PubMed:16769904, PubMed:26789250). Pol II-mediated transcription cycle proceeds through transcription initiation, transcription elongation and transcription termination stages. During transcription initiation, Pol II pre-initiation complex (PIC) is recruited to DNA promoters, with focused-type promoters containing either the initiator (Inr) element, or the TATA-box found in cell-type specific genes and dispersed-type promoters that often contain hypomethylated CpG islands usually found in housekeeping genes. Once the polymerase has escaped from the promoter it enters the elongation phase during which RNA is actively polymerized, based on complementarity with the template DNA strand. Transcription termination involves the release of the RNA transcript and polymerase from the DNA (PubMed:16769904, PubMed:26789250). Forms Pol II active center together with the largest subunit POLR2A/RPB1. Appends one nucleotide at a time to the 3' end of the nascent RNA, with POLR2A/RPB1 most likely contributing a Mg(2+)-coordinating DxDGD motif, and POLR2B/RPB2 participating in the coordination of a second Mg(2+) ion and providing lysine residues believed to facilitate Watson-Crick base pairing between the incoming nucleotide and template base. Typically, Mg(2+) ions direct a 5' nucleoside triphosphate to form a phosphodiester bond with the 3' hydroxyl of the preceding nucleotide of the nascent RNA, with the elimination of pyrophosphate. The reversible pyrophosphorolysis can occur at high pyrophosphate concentrations (By similarity) (PubMed:16769904, PubMed:26789250). Can proofread the nascent RNA transcript by means of a 3' -&gt; 5' exonuclease activity. If a ribonucleotide is mis-incorporated, backtracks along the template DNA and cleaves the phosphodiester bond releasing the mis-incorporated 5'-ribonucleotide (By similarity) (PubMed:9604937).</text>
</comment>
<comment type="function">
    <text evidence="2">RNA-dependent RNA polymerase that catalyzes the extension of a non-coding RNA (ncRNA) at the 3'-end using the four ribonucleoside triphosphates as substrates. An internal ncRNA sequence near the 3'-end serves as a template in a single-round Pol II-mediated RNA polymerization reaction. May decrease the stability of ncRNAs that repress Pol II-mediated gene transcription.</text>
</comment>
<comment type="catalytic activity">
    <reaction evidence="3 4">
        <text>RNA(n) + a ribonucleoside 5'-triphosphate = RNA(n+1) + diphosphate</text>
        <dbReference type="Rhea" id="RHEA:21248"/>
        <dbReference type="Rhea" id="RHEA-COMP:14527"/>
        <dbReference type="Rhea" id="RHEA-COMP:17342"/>
        <dbReference type="ChEBI" id="CHEBI:33019"/>
        <dbReference type="ChEBI" id="CHEBI:61557"/>
        <dbReference type="ChEBI" id="CHEBI:140395"/>
        <dbReference type="EC" id="2.7.7.6"/>
    </reaction>
    <physiologicalReaction direction="left-to-right" evidence="3 4">
        <dbReference type="Rhea" id="RHEA:21249"/>
    </physiologicalReaction>
    <physiologicalReaction direction="right-to-left" evidence="2">
        <dbReference type="Rhea" id="RHEA:21250"/>
    </physiologicalReaction>
</comment>
<comment type="catalytic activity">
    <reaction evidence="2">
        <text>RNA(n) + a ribonucleoside 5'-triphosphate = RNA(n+1) + diphosphate</text>
        <dbReference type="Rhea" id="RHEA:21248"/>
        <dbReference type="Rhea" id="RHEA-COMP:14527"/>
        <dbReference type="Rhea" id="RHEA-COMP:17342"/>
        <dbReference type="ChEBI" id="CHEBI:33019"/>
        <dbReference type="ChEBI" id="CHEBI:61557"/>
        <dbReference type="ChEBI" id="CHEBI:140395"/>
        <dbReference type="EC" id="2.7.7.48"/>
    </reaction>
    <physiologicalReaction direction="left-to-right" evidence="2">
        <dbReference type="Rhea" id="RHEA:21249"/>
    </physiologicalReaction>
</comment>
<comment type="catalytic activity">
    <reaction evidence="2">
        <text>a 3'-end ribonucleotidyl-ribonucleotide-RNA + H2O = a 3'-end ribonucleotide-RNA + a ribonucleoside 5'-phosphate + H(+)</text>
        <dbReference type="Rhea" id="RHEA:77763"/>
        <dbReference type="Rhea" id="RHEA-COMP:17428"/>
        <dbReference type="Rhea" id="RHEA-COMP:18982"/>
        <dbReference type="ChEBI" id="CHEBI:15377"/>
        <dbReference type="ChEBI" id="CHEBI:15378"/>
        <dbReference type="ChEBI" id="CHEBI:58043"/>
        <dbReference type="ChEBI" id="CHEBI:74896"/>
        <dbReference type="ChEBI" id="CHEBI:197502"/>
    </reaction>
    <physiologicalReaction direction="left-to-right" evidence="2">
        <dbReference type="Rhea" id="RHEA:77764"/>
    </physiologicalReaction>
</comment>
<comment type="cofactor">
    <cofactor evidence="2">
        <name>Mg(2+)</name>
        <dbReference type="ChEBI" id="CHEBI:18420"/>
    </cofactor>
    <text evidence="2">Two Mg(2+) ions are coordinated by both the catalytic residues and the nucleic acid substrate to enhance substrate recognition and catalytic efficiency.</text>
</comment>
<comment type="subunit">
    <text evidence="2 3 4 5">Component of the RNA polymerase II (Pol II) core complex consisting of 12 subunits: a ten-subunit catalytic core composed of POLR2A/RPB1, POLR2B/RPB2, POLR2C/RPB3, POLR2I/RPB9, POLR2J/RPB11, POLR2E/RPABC1, POLR2F/RPABC2, POLR2H/RPABC3, POLR2K/RPABC4 and POLR2L/RPABC5 and a mobile stalk composed of two subunits POLR2D/RPB4 and POLR2G/RPB7, protruding from the core and functioning primarily in transcription initiation. Part of Pol II(G) complex, in which Pol II core associates with an additional subunit POLR2M; unlike conventional Pol II, Pol II(G) functions as a transcriptional repressor. Part of Pol II pre-initiation complex (PIC), in which Pol II core assembles with Mediator, general transcription factors and other specific initiation factors including GTF2E1, GTF2E2, GTF2F1, GTF2F2, TCEA1, ERCC2, ERCC3, GTF2H2, GTF2H3, GTF2H4, GTF2H5, GTF2A1, GTF2A2, GTF2B and TBP; this large multi-subunit PIC complex mediates DNA unwinding and targets Pol II core to the transcription start site where the first phosphodiester bond forms (By similarity) (PubMed:16769904, PubMed:26789250, PubMed:28892040). Interacts with WDR82. Interacts with MEN1 (By similarity).</text>
</comment>
<comment type="interaction">
    <interactant intactId="EBI-15586776">
        <id>A5PJW8</id>
    </interactant>
    <interactant intactId="EBI-6551200">
        <id>G3MZY8</id>
        <label>POLR2A</label>
    </interactant>
    <organismsDiffer>false</organismsDiffer>
    <experiments>6</experiments>
</comment>
<comment type="interaction">
    <interactant intactId="EBI-15586776">
        <id>A5PJW8</id>
    </interactant>
    <interactant intactId="EBI-710464">
        <id>O00267</id>
        <label>SUPT5H</label>
    </interactant>
    <organismsDiffer>true</organismsDiffer>
    <experiments>5</experiments>
</comment>
<comment type="subcellular location">
    <subcellularLocation>
        <location evidence="2">Nucleus</location>
    </subcellularLocation>
</comment>
<comment type="similarity">
    <text evidence="7">Belongs to the RNA polymerase beta chain family.</text>
</comment>
<keyword id="KW-0002">3D-structure</keyword>
<keyword id="KW-0240">DNA-directed RNA polymerase</keyword>
<keyword id="KW-0378">Hydrolase</keyword>
<keyword id="KW-0460">Magnesium</keyword>
<keyword id="KW-0479">Metal-binding</keyword>
<keyword id="KW-0488">Methylation</keyword>
<keyword id="KW-0548">Nucleotidyltransferase</keyword>
<keyword id="KW-0539">Nucleus</keyword>
<keyword id="KW-0597">Phosphoprotein</keyword>
<keyword id="KW-1185">Reference proteome</keyword>
<keyword id="KW-0696">RNA-directed RNA polymerase</keyword>
<keyword id="KW-0804">Transcription</keyword>
<keyword id="KW-0808">Transferase</keyword>
<keyword id="KW-0862">Zinc</keyword>
<keyword id="KW-0863">Zinc-finger</keyword>
<organism>
    <name type="scientific">Bos taurus</name>
    <name type="common">Bovine</name>
    <dbReference type="NCBI Taxonomy" id="9913"/>
    <lineage>
        <taxon>Eukaryota</taxon>
        <taxon>Metazoa</taxon>
        <taxon>Chordata</taxon>
        <taxon>Craniata</taxon>
        <taxon>Vertebrata</taxon>
        <taxon>Euteleostomi</taxon>
        <taxon>Mammalia</taxon>
        <taxon>Eutheria</taxon>
        <taxon>Laurasiatheria</taxon>
        <taxon>Artiodactyla</taxon>
        <taxon>Ruminantia</taxon>
        <taxon>Pecora</taxon>
        <taxon>Bovidae</taxon>
        <taxon>Bovinae</taxon>
        <taxon>Bos</taxon>
    </lineage>
</organism>